<name>ATPG_ECOUT</name>
<sequence length="287" mass="31577">MAGAKEIRSKIASVQNTQKITKAMEMVAASKMRKSQDRMAASRPYAETMRKVIGHLAHGNLEYKHPYLEDRDVKRVGYLVVSTDRGLCGGLNINLFKKLLAEMKTWTDKGVQCDLAMIGSKGVSFFNSVGGNVVAQVTGMGDNPSLSELIGPVKVMLQAYDEGRLDKLYIVSNKFINTMSQVPTISQLLPLPASDDDDLKHKSWDYLYEPDPKALLDTLLRRYVESQVYQGVVENLASEQAARMVAMKAATDNGGSLIKELQLVYNKARQASITQELTEIVSGAAAV</sequence>
<accession>Q1R4K1</accession>
<feature type="chain" id="PRO_1000053205" description="ATP synthase gamma chain">
    <location>
        <begin position="1"/>
        <end position="287"/>
    </location>
</feature>
<evidence type="ECO:0000255" key="1">
    <source>
        <dbReference type="HAMAP-Rule" id="MF_00815"/>
    </source>
</evidence>
<organism>
    <name type="scientific">Escherichia coli (strain UTI89 / UPEC)</name>
    <dbReference type="NCBI Taxonomy" id="364106"/>
    <lineage>
        <taxon>Bacteria</taxon>
        <taxon>Pseudomonadati</taxon>
        <taxon>Pseudomonadota</taxon>
        <taxon>Gammaproteobacteria</taxon>
        <taxon>Enterobacterales</taxon>
        <taxon>Enterobacteriaceae</taxon>
        <taxon>Escherichia</taxon>
    </lineage>
</organism>
<dbReference type="EMBL" id="CP000243">
    <property type="protein sequence ID" value="ABE09713.1"/>
    <property type="molecule type" value="Genomic_DNA"/>
</dbReference>
<dbReference type="RefSeq" id="WP_000896498.1">
    <property type="nucleotide sequence ID" value="NZ_CP064825.1"/>
</dbReference>
<dbReference type="SMR" id="Q1R4K1"/>
<dbReference type="GeneID" id="93778234"/>
<dbReference type="KEGG" id="eci:UTI89_C4286"/>
<dbReference type="HOGENOM" id="CLU_050669_0_1_6"/>
<dbReference type="Proteomes" id="UP000001952">
    <property type="component" value="Chromosome"/>
</dbReference>
<dbReference type="GO" id="GO:0005886">
    <property type="term" value="C:plasma membrane"/>
    <property type="evidence" value="ECO:0007669"/>
    <property type="project" value="UniProtKB-SubCell"/>
</dbReference>
<dbReference type="GO" id="GO:0045259">
    <property type="term" value="C:proton-transporting ATP synthase complex"/>
    <property type="evidence" value="ECO:0007669"/>
    <property type="project" value="UniProtKB-KW"/>
</dbReference>
<dbReference type="GO" id="GO:0005524">
    <property type="term" value="F:ATP binding"/>
    <property type="evidence" value="ECO:0007669"/>
    <property type="project" value="UniProtKB-UniRule"/>
</dbReference>
<dbReference type="GO" id="GO:0046933">
    <property type="term" value="F:proton-transporting ATP synthase activity, rotational mechanism"/>
    <property type="evidence" value="ECO:0007669"/>
    <property type="project" value="UniProtKB-UniRule"/>
</dbReference>
<dbReference type="GO" id="GO:0042777">
    <property type="term" value="P:proton motive force-driven plasma membrane ATP synthesis"/>
    <property type="evidence" value="ECO:0007669"/>
    <property type="project" value="UniProtKB-UniRule"/>
</dbReference>
<dbReference type="CDD" id="cd12151">
    <property type="entry name" value="F1-ATPase_gamma"/>
    <property type="match status" value="1"/>
</dbReference>
<dbReference type="FunFam" id="1.10.287.80:FF:000005">
    <property type="entry name" value="ATP synthase gamma chain"/>
    <property type="match status" value="2"/>
</dbReference>
<dbReference type="FunFam" id="3.40.1380.10:FF:000001">
    <property type="entry name" value="ATP synthase gamma chain"/>
    <property type="match status" value="1"/>
</dbReference>
<dbReference type="Gene3D" id="3.40.1380.10">
    <property type="match status" value="1"/>
</dbReference>
<dbReference type="Gene3D" id="1.10.287.80">
    <property type="entry name" value="ATP synthase, gamma subunit, helix hairpin domain"/>
    <property type="match status" value="1"/>
</dbReference>
<dbReference type="HAMAP" id="MF_00815">
    <property type="entry name" value="ATP_synth_gamma_bact"/>
    <property type="match status" value="1"/>
</dbReference>
<dbReference type="InterPro" id="IPR035968">
    <property type="entry name" value="ATP_synth_F1_ATPase_gsu"/>
</dbReference>
<dbReference type="InterPro" id="IPR000131">
    <property type="entry name" value="ATP_synth_F1_gsu"/>
</dbReference>
<dbReference type="InterPro" id="IPR023632">
    <property type="entry name" value="ATP_synth_F1_gsu_CS"/>
</dbReference>
<dbReference type="NCBIfam" id="TIGR01146">
    <property type="entry name" value="ATPsyn_F1gamma"/>
    <property type="match status" value="1"/>
</dbReference>
<dbReference type="NCBIfam" id="NF004144">
    <property type="entry name" value="PRK05621.1-1"/>
    <property type="match status" value="1"/>
</dbReference>
<dbReference type="PANTHER" id="PTHR11693">
    <property type="entry name" value="ATP SYNTHASE GAMMA CHAIN"/>
    <property type="match status" value="1"/>
</dbReference>
<dbReference type="PANTHER" id="PTHR11693:SF22">
    <property type="entry name" value="ATP SYNTHASE SUBUNIT GAMMA, MITOCHONDRIAL"/>
    <property type="match status" value="1"/>
</dbReference>
<dbReference type="Pfam" id="PF00231">
    <property type="entry name" value="ATP-synt"/>
    <property type="match status" value="1"/>
</dbReference>
<dbReference type="PRINTS" id="PR00126">
    <property type="entry name" value="ATPASEGAMMA"/>
</dbReference>
<dbReference type="SUPFAM" id="SSF52943">
    <property type="entry name" value="ATP synthase (F1-ATPase), gamma subunit"/>
    <property type="match status" value="1"/>
</dbReference>
<dbReference type="PROSITE" id="PS00153">
    <property type="entry name" value="ATPASE_GAMMA"/>
    <property type="match status" value="1"/>
</dbReference>
<protein>
    <recommendedName>
        <fullName evidence="1">ATP synthase gamma chain</fullName>
    </recommendedName>
    <alternativeName>
        <fullName evidence="1">ATP synthase F1 sector gamma subunit</fullName>
    </alternativeName>
    <alternativeName>
        <fullName evidence="1">F-ATPase gamma subunit</fullName>
    </alternativeName>
</protein>
<reference key="1">
    <citation type="journal article" date="2006" name="Proc. Natl. Acad. Sci. U.S.A.">
        <title>Identification of genes subject to positive selection in uropathogenic strains of Escherichia coli: a comparative genomics approach.</title>
        <authorList>
            <person name="Chen S.L."/>
            <person name="Hung C.-S."/>
            <person name="Xu J."/>
            <person name="Reigstad C.S."/>
            <person name="Magrini V."/>
            <person name="Sabo A."/>
            <person name="Blasiar D."/>
            <person name="Bieri T."/>
            <person name="Meyer R.R."/>
            <person name="Ozersky P."/>
            <person name="Armstrong J.R."/>
            <person name="Fulton R.S."/>
            <person name="Latreille J.P."/>
            <person name="Spieth J."/>
            <person name="Hooton T.M."/>
            <person name="Mardis E.R."/>
            <person name="Hultgren S.J."/>
            <person name="Gordon J.I."/>
        </authorList>
    </citation>
    <scope>NUCLEOTIDE SEQUENCE [LARGE SCALE GENOMIC DNA]</scope>
    <source>
        <strain>UTI89 / UPEC</strain>
    </source>
</reference>
<keyword id="KW-0066">ATP synthesis</keyword>
<keyword id="KW-0997">Cell inner membrane</keyword>
<keyword id="KW-1003">Cell membrane</keyword>
<keyword id="KW-0139">CF(1)</keyword>
<keyword id="KW-0375">Hydrogen ion transport</keyword>
<keyword id="KW-0406">Ion transport</keyword>
<keyword id="KW-0472">Membrane</keyword>
<keyword id="KW-0813">Transport</keyword>
<gene>
    <name evidence="1" type="primary">atpG</name>
    <name type="ordered locus">UTI89_C4286</name>
</gene>
<proteinExistence type="inferred from homology"/>
<comment type="function">
    <text evidence="1">Produces ATP from ADP in the presence of a proton gradient across the membrane. The gamma chain is believed to be important in regulating ATPase activity and the flow of protons through the CF(0) complex.</text>
</comment>
<comment type="subunit">
    <text evidence="1">F-type ATPases have 2 components, CF(1) - the catalytic core - and CF(0) - the membrane proton channel. CF(1) has five subunits: alpha(3), beta(3), gamma(1), delta(1), epsilon(1). CF(0) has three main subunits: a, b and c.</text>
</comment>
<comment type="subcellular location">
    <subcellularLocation>
        <location evidence="1">Cell inner membrane</location>
        <topology evidence="1">Peripheral membrane protein</topology>
    </subcellularLocation>
</comment>
<comment type="similarity">
    <text evidence="1">Belongs to the ATPase gamma chain family.</text>
</comment>